<proteinExistence type="evidence at transcript level"/>
<reference key="1">
    <citation type="submission" date="2000-01" db="EMBL/GenBank/DDBJ databases">
        <title>Bovine retina type II N-myristoyltransferase.</title>
        <authorList>
            <person name="Rundle D.R."/>
            <person name="Alvarez R.A."/>
            <person name="Anderson R.E."/>
        </authorList>
    </citation>
    <scope>NUCLEOTIDE SEQUENCE [MRNA]</scope>
    <source>
        <tissue>Retina</tissue>
    </source>
</reference>
<organism>
    <name type="scientific">Bos taurus</name>
    <name type="common">Bovine</name>
    <dbReference type="NCBI Taxonomy" id="9913"/>
    <lineage>
        <taxon>Eukaryota</taxon>
        <taxon>Metazoa</taxon>
        <taxon>Chordata</taxon>
        <taxon>Craniata</taxon>
        <taxon>Vertebrata</taxon>
        <taxon>Euteleostomi</taxon>
        <taxon>Mammalia</taxon>
        <taxon>Eutheria</taxon>
        <taxon>Laurasiatheria</taxon>
        <taxon>Artiodactyla</taxon>
        <taxon>Ruminantia</taxon>
        <taxon>Pecora</taxon>
        <taxon>Bovidae</taxon>
        <taxon>Bovinae</taxon>
        <taxon>Bos</taxon>
    </lineage>
</organism>
<feature type="chain" id="PRO_0000064225" description="Glycylpeptide N-tetradecanoyltransferase 2">
    <location>
        <begin position="1"/>
        <end position="498"/>
    </location>
</feature>
<feature type="region of interest" description="Disordered" evidence="2">
    <location>
        <begin position="1"/>
        <end position="87"/>
    </location>
</feature>
<feature type="compositionally biased region" description="Acidic residues" evidence="2">
    <location>
        <begin position="15"/>
        <end position="32"/>
    </location>
</feature>
<feature type="compositionally biased region" description="Basic residues" evidence="2">
    <location>
        <begin position="46"/>
        <end position="57"/>
    </location>
</feature>
<feature type="compositionally biased region" description="Polar residues" evidence="2">
    <location>
        <begin position="61"/>
        <end position="72"/>
    </location>
</feature>
<feature type="binding site" evidence="1">
    <location>
        <position position="117"/>
    </location>
    <ligand>
        <name>tetradecanoyl-CoA</name>
        <dbReference type="ChEBI" id="CHEBI:57385"/>
    </ligand>
</feature>
<feature type="binding site" evidence="1">
    <location>
        <position position="122"/>
    </location>
    <ligand>
        <name>tetradecanoyl-CoA</name>
        <dbReference type="ChEBI" id="CHEBI:57385"/>
    </ligand>
</feature>
<feature type="binding site" evidence="1">
    <location>
        <position position="250"/>
    </location>
    <ligand>
        <name>tetradecanoyl-CoA</name>
        <dbReference type="ChEBI" id="CHEBI:57385"/>
    </ligand>
</feature>
<feature type="binding site" evidence="1">
    <location>
        <position position="252"/>
    </location>
    <ligand>
        <name>tetradecanoyl-CoA</name>
        <dbReference type="ChEBI" id="CHEBI:57385"/>
    </ligand>
</feature>
<feature type="binding site" evidence="1">
    <location>
        <position position="258"/>
    </location>
    <ligand>
        <name>tetradecanoyl-CoA</name>
        <dbReference type="ChEBI" id="CHEBI:57385"/>
    </ligand>
</feature>
<feature type="binding site" evidence="1">
    <location>
        <position position="260"/>
    </location>
    <ligand>
        <name>tetradecanoyl-CoA</name>
        <dbReference type="ChEBI" id="CHEBI:57385"/>
    </ligand>
</feature>
<feature type="binding site" evidence="1">
    <location>
        <position position="261"/>
    </location>
    <ligand>
        <name>tetradecanoyl-CoA</name>
        <dbReference type="ChEBI" id="CHEBI:57385"/>
    </ligand>
</feature>
<feature type="binding site" evidence="1">
    <location>
        <position position="262"/>
    </location>
    <ligand>
        <name>tetradecanoyl-CoA</name>
        <dbReference type="ChEBI" id="CHEBI:57385"/>
    </ligand>
</feature>
<feature type="modified residue" description="Phosphoserine" evidence="1">
    <location>
        <position position="38"/>
    </location>
</feature>
<protein>
    <recommendedName>
        <fullName>Glycylpeptide N-tetradecanoyltransferase 2</fullName>
        <ecNumber evidence="1">2.3.1.97</ecNumber>
    </recommendedName>
    <alternativeName>
        <fullName>Myristoyl-CoA:protein N-myristoyltransferase 2</fullName>
        <shortName>NMT 2</shortName>
    </alternativeName>
    <alternativeName>
        <fullName>Peptide N-myristoyltransferase 2</fullName>
    </alternativeName>
    <alternativeName>
        <fullName>Type II N-myristoyltransferase</fullName>
    </alternativeName>
</protein>
<dbReference type="EC" id="2.3.1.97" evidence="1"/>
<dbReference type="EMBL" id="AF222687">
    <property type="protein sequence ID" value="AAF31456.1"/>
    <property type="molecule type" value="mRNA"/>
</dbReference>
<dbReference type="RefSeq" id="NP_776881.1">
    <property type="nucleotide sequence ID" value="NM_174456.2"/>
</dbReference>
<dbReference type="SMR" id="Q9N181"/>
<dbReference type="FunCoup" id="Q9N181">
    <property type="interactions" value="3484"/>
</dbReference>
<dbReference type="STRING" id="9913.ENSBTAP00000047156"/>
<dbReference type="PaxDb" id="9913-ENSBTAP00000055459"/>
<dbReference type="GeneID" id="282049"/>
<dbReference type="KEGG" id="bta:282049"/>
<dbReference type="CTD" id="9397"/>
<dbReference type="VEuPathDB" id="HostDB:ENSBTAG00000007703"/>
<dbReference type="eggNOG" id="KOG2779">
    <property type="taxonomic scope" value="Eukaryota"/>
</dbReference>
<dbReference type="HOGENOM" id="CLU_022882_1_0_1"/>
<dbReference type="InParanoid" id="Q9N181"/>
<dbReference type="OMA" id="CPAMESE"/>
<dbReference type="OrthoDB" id="60315at2759"/>
<dbReference type="BRENDA" id="2.3.1.97">
    <property type="organism ID" value="908"/>
</dbReference>
<dbReference type="Reactome" id="R-BTA-2514859">
    <property type="pathway name" value="Inactivation, recovery and regulation of the phototransduction cascade"/>
</dbReference>
<dbReference type="Proteomes" id="UP000009136">
    <property type="component" value="Chromosome 13"/>
</dbReference>
<dbReference type="Bgee" id="ENSBTAG00000007703">
    <property type="expression patterns" value="Expressed in occipital lobe and 103 other cell types or tissues"/>
</dbReference>
<dbReference type="GO" id="GO:0005829">
    <property type="term" value="C:cytosol"/>
    <property type="evidence" value="ECO:0000318"/>
    <property type="project" value="GO_Central"/>
</dbReference>
<dbReference type="GO" id="GO:0016020">
    <property type="term" value="C:membrane"/>
    <property type="evidence" value="ECO:0007669"/>
    <property type="project" value="UniProtKB-SubCell"/>
</dbReference>
<dbReference type="GO" id="GO:0004379">
    <property type="term" value="F:glycylpeptide N-tetradecanoyltransferase activity"/>
    <property type="evidence" value="ECO:0000250"/>
    <property type="project" value="UniProtKB"/>
</dbReference>
<dbReference type="GO" id="GO:0018030">
    <property type="term" value="F:peptidyl-lysine N6-myristoyltransferase activity"/>
    <property type="evidence" value="ECO:0000250"/>
    <property type="project" value="UniProtKB"/>
</dbReference>
<dbReference type="GO" id="GO:0018008">
    <property type="term" value="P:N-terminal peptidyl-glycine N-myristoylation"/>
    <property type="evidence" value="ECO:0000250"/>
    <property type="project" value="UniProtKB"/>
</dbReference>
<dbReference type="GO" id="GO:0072657">
    <property type="term" value="P:protein localization to membrane"/>
    <property type="evidence" value="ECO:0000318"/>
    <property type="project" value="GO_Central"/>
</dbReference>
<dbReference type="FunFam" id="3.40.630.170:FF:000001">
    <property type="entry name" value="Glycylpeptide N-tetradecanoyltransferase"/>
    <property type="match status" value="1"/>
</dbReference>
<dbReference type="Gene3D" id="3.40.630.170">
    <property type="match status" value="1"/>
</dbReference>
<dbReference type="InterPro" id="IPR016181">
    <property type="entry name" value="Acyl_CoA_acyltransferase"/>
</dbReference>
<dbReference type="InterPro" id="IPR000903">
    <property type="entry name" value="NMT"/>
</dbReference>
<dbReference type="InterPro" id="IPR022677">
    <property type="entry name" value="NMT_C"/>
</dbReference>
<dbReference type="InterPro" id="IPR022678">
    <property type="entry name" value="NMT_CS"/>
</dbReference>
<dbReference type="InterPro" id="IPR022676">
    <property type="entry name" value="NMT_N"/>
</dbReference>
<dbReference type="PANTHER" id="PTHR11377:SF14">
    <property type="entry name" value="GLYCYLPEPTIDE N-TETRADECANOYLTRANSFERASE 2"/>
    <property type="match status" value="1"/>
</dbReference>
<dbReference type="PANTHER" id="PTHR11377">
    <property type="entry name" value="N-MYRISTOYL TRANSFERASE"/>
    <property type="match status" value="1"/>
</dbReference>
<dbReference type="Pfam" id="PF01233">
    <property type="entry name" value="NMT"/>
    <property type="match status" value="1"/>
</dbReference>
<dbReference type="Pfam" id="PF02799">
    <property type="entry name" value="NMT_C"/>
    <property type="match status" value="1"/>
</dbReference>
<dbReference type="PIRSF" id="PIRSF015892">
    <property type="entry name" value="N-myristl_transf"/>
    <property type="match status" value="1"/>
</dbReference>
<dbReference type="SUPFAM" id="SSF55729">
    <property type="entry name" value="Acyl-CoA N-acyltransferases (Nat)"/>
    <property type="match status" value="2"/>
</dbReference>
<dbReference type="PROSITE" id="PS00975">
    <property type="entry name" value="NMT_1"/>
    <property type="match status" value="1"/>
</dbReference>
<dbReference type="PROSITE" id="PS00976">
    <property type="entry name" value="NMT_2"/>
    <property type="match status" value="1"/>
</dbReference>
<gene>
    <name type="primary">NMT2</name>
</gene>
<sequence>MAEDSESAASQQSLELDDQDTCGIDGDNEEETEHAKGSPGGDLGAKKKKKKQKRKKEKPNSGGTKSDSASDSQEIKIQPPSKNSTIPVQKLQDIQRAMELLSACQGPARNIDEAAKHRYQFWDTQPVPKLNEVITSHGAIEADKENVRQEPYSLPQGFMWDTLDLGNAEVLRELYTLLNENYVEDDDNMFRFDYSPEFLLWALRPPGWLLQWHCGVRVSSNKKLVGFISAIPANIRIYDSVKKMVEINFLCVHKKLRSKRVAPVLIREITRRVNLEGIFQAVYTAGVVLPKPVATCRYWHRSLNPRKLVEVKFSHLSRNMTLQRTMKLYRLPDATKTSGLRPMEPRDIKAVQELTNTYLKQFHLAPVMDEEEVAHWFLPQEHIIDTFVVENSSGKLTDFLSFYTLPSTVMHHPAHKSLKAAYSFYNIHTETPLLDLMSDALIIAKLKGFDVFNALDLMENKTFLEKLKFGIGDGNLQYYLYNWRCPGTESEKVGLVLQ</sequence>
<name>NMT2_BOVIN</name>
<evidence type="ECO:0000250" key="1">
    <source>
        <dbReference type="UniProtKB" id="O60551"/>
    </source>
</evidence>
<evidence type="ECO:0000256" key="2">
    <source>
        <dbReference type="SAM" id="MobiDB-lite"/>
    </source>
</evidence>
<evidence type="ECO:0000305" key="3"/>
<comment type="function">
    <text evidence="1">Adds a myristoyl group to the N-terminal glycine residue of certain cellular and viral proteins. Also able to mediate N-terminal lysine myristoylation of proteins: catalyzes myristoylation of ARF6 on both 'Gly-2' and 'Lys-3'. Lysine myristoylation is required to maintain ARF6 on membranes during the GTPase cycle.</text>
</comment>
<comment type="catalytic activity">
    <reaction evidence="1">
        <text>N-terminal glycyl-[protein] + tetradecanoyl-CoA = N-tetradecanoylglycyl-[protein] + CoA + H(+)</text>
        <dbReference type="Rhea" id="RHEA:15521"/>
        <dbReference type="Rhea" id="RHEA-COMP:12666"/>
        <dbReference type="Rhea" id="RHEA-COMP:12667"/>
        <dbReference type="ChEBI" id="CHEBI:15378"/>
        <dbReference type="ChEBI" id="CHEBI:57287"/>
        <dbReference type="ChEBI" id="CHEBI:57385"/>
        <dbReference type="ChEBI" id="CHEBI:64723"/>
        <dbReference type="ChEBI" id="CHEBI:133050"/>
        <dbReference type="EC" id="2.3.1.97"/>
    </reaction>
</comment>
<comment type="catalytic activity">
    <reaction evidence="1">
        <text>N-terminal glycyl-L-lysyl-[protein] + tetradecanoyl-CoA = N-terminal glycyl-(N(6)-tetradecanoyl)-L-lysyl-[protein] + CoA + H(+)</text>
        <dbReference type="Rhea" id="RHEA:70671"/>
        <dbReference type="Rhea" id="RHEA-COMP:17947"/>
        <dbReference type="Rhea" id="RHEA-COMP:17948"/>
        <dbReference type="ChEBI" id="CHEBI:15378"/>
        <dbReference type="ChEBI" id="CHEBI:57287"/>
        <dbReference type="ChEBI" id="CHEBI:57385"/>
        <dbReference type="ChEBI" id="CHEBI:189855"/>
        <dbReference type="ChEBI" id="CHEBI:189856"/>
    </reaction>
    <physiologicalReaction direction="left-to-right" evidence="1">
        <dbReference type="Rhea" id="RHEA:70672"/>
    </physiologicalReaction>
</comment>
<comment type="subcellular location">
    <subcellularLocation>
        <location evidence="1">Cytoplasm</location>
    </subcellularLocation>
    <subcellularLocation>
        <location evidence="1">Membrane</location>
        <topology evidence="1">Peripheral membrane protein</topology>
    </subcellularLocation>
</comment>
<comment type="similarity">
    <text evidence="3">Belongs to the NMT family.</text>
</comment>
<keyword id="KW-0012">Acyltransferase</keyword>
<keyword id="KW-0963">Cytoplasm</keyword>
<keyword id="KW-0472">Membrane</keyword>
<keyword id="KW-0597">Phosphoprotein</keyword>
<keyword id="KW-1185">Reference proteome</keyword>
<keyword id="KW-0808">Transferase</keyword>
<accession>Q9N181</accession>